<protein>
    <recommendedName>
        <fullName>Putative S-adenosyl-L-methionine-dependent methyltransferase Mmcs_0088</fullName>
        <ecNumber>2.1.1.-</ecNumber>
    </recommendedName>
</protein>
<gene>
    <name type="ordered locus">Mmcs_0088</name>
</gene>
<sequence length="312" mass="34436">MSSLRTADDTWDIATSVGSTAVMVAASRAAETERDEALIRDPYARLLVTGAGTGIWESVLDAKFVETVAAADAEAAAIFEHMISYQAVRTHFFDAFFTAAAEAGIRQIVILASGLDSRAYRLDWPSGTTVYEIDQPKVLEYKSATLAEHGVEPAATRREVGIDLRHDWPAALRGAGFDPSRPTAWLAEGLLMYLPADAQDRLFEQITELSAPGSRVAAETAGVQAEDRRQQMRERFERIAEKFDMTASLDIQQLIYEDPDRADVADWLDAHGWTATAVSSQQEMRRLDRWALPADLTDDDAFSNFVTAEKQS</sequence>
<feature type="chain" id="PRO_0000361215" description="Putative S-adenosyl-L-methionine-dependent methyltransferase Mmcs_0088">
    <location>
        <begin position="1"/>
        <end position="312"/>
    </location>
</feature>
<feature type="binding site" evidence="1">
    <location>
        <position position="134"/>
    </location>
    <ligand>
        <name>S-adenosyl-L-methionine</name>
        <dbReference type="ChEBI" id="CHEBI:59789"/>
    </ligand>
</feature>
<feature type="binding site" evidence="1">
    <location>
        <begin position="163"/>
        <end position="164"/>
    </location>
    <ligand>
        <name>S-adenosyl-L-methionine</name>
        <dbReference type="ChEBI" id="CHEBI:59789"/>
    </ligand>
</feature>
<accession>Q1BFX4</accession>
<name>Y088_MYCSS</name>
<dbReference type="EC" id="2.1.1.-"/>
<dbReference type="EMBL" id="CP000384">
    <property type="protein sequence ID" value="ABG06210.1"/>
    <property type="molecule type" value="Genomic_DNA"/>
</dbReference>
<dbReference type="SMR" id="Q1BFX4"/>
<dbReference type="KEGG" id="mmc:Mmcs_0088"/>
<dbReference type="HOGENOM" id="CLU_056160_2_1_11"/>
<dbReference type="BioCyc" id="MSP164756:G1G6O-94-MONOMER"/>
<dbReference type="GO" id="GO:0008168">
    <property type="term" value="F:methyltransferase activity"/>
    <property type="evidence" value="ECO:0007669"/>
    <property type="project" value="UniProtKB-KW"/>
</dbReference>
<dbReference type="GO" id="GO:0032259">
    <property type="term" value="P:methylation"/>
    <property type="evidence" value="ECO:0007669"/>
    <property type="project" value="UniProtKB-KW"/>
</dbReference>
<dbReference type="FunFam" id="3.40.50.150:FF:000152">
    <property type="entry name" value="S-adenosyl-L-methionine-dependent methyltransferase"/>
    <property type="match status" value="1"/>
</dbReference>
<dbReference type="Gene3D" id="3.40.50.150">
    <property type="entry name" value="Vaccinia Virus protein VP39"/>
    <property type="match status" value="1"/>
</dbReference>
<dbReference type="InterPro" id="IPR007213">
    <property type="entry name" value="Ppm1/Ppm2/Tcmp"/>
</dbReference>
<dbReference type="InterPro" id="IPR029063">
    <property type="entry name" value="SAM-dependent_MTases_sf"/>
</dbReference>
<dbReference type="InterPro" id="IPR011610">
    <property type="entry name" value="SAM_mthyl_Trfase_ML2640-like"/>
</dbReference>
<dbReference type="NCBIfam" id="TIGR00027">
    <property type="entry name" value="mthyl_TIGR00027"/>
    <property type="match status" value="1"/>
</dbReference>
<dbReference type="PANTHER" id="PTHR43619">
    <property type="entry name" value="S-ADENOSYL-L-METHIONINE-DEPENDENT METHYLTRANSFERASE YKTD-RELATED"/>
    <property type="match status" value="1"/>
</dbReference>
<dbReference type="PANTHER" id="PTHR43619:SF2">
    <property type="entry name" value="S-ADENOSYL-L-METHIONINE-DEPENDENT METHYLTRANSFERASES SUPERFAMILY PROTEIN"/>
    <property type="match status" value="1"/>
</dbReference>
<dbReference type="Pfam" id="PF04072">
    <property type="entry name" value="LCM"/>
    <property type="match status" value="1"/>
</dbReference>
<dbReference type="SUPFAM" id="SSF53335">
    <property type="entry name" value="S-adenosyl-L-methionine-dependent methyltransferases"/>
    <property type="match status" value="1"/>
</dbReference>
<reference key="1">
    <citation type="submission" date="2006-06" db="EMBL/GenBank/DDBJ databases">
        <title>Complete sequence of chromosome of Mycobacterium sp. MCS.</title>
        <authorList>
            <consortium name="US DOE Joint Genome Institute"/>
            <person name="Copeland A."/>
            <person name="Lucas S."/>
            <person name="Lapidus A."/>
            <person name="Barry K."/>
            <person name="Detter J.C."/>
            <person name="Glavina del Rio T."/>
            <person name="Hammon N."/>
            <person name="Israni S."/>
            <person name="Dalin E."/>
            <person name="Tice H."/>
            <person name="Pitluck S."/>
            <person name="Martinez M."/>
            <person name="Schmutz J."/>
            <person name="Larimer F."/>
            <person name="Land M."/>
            <person name="Hauser L."/>
            <person name="Kyrpides N."/>
            <person name="Kim E."/>
            <person name="Miller C.D."/>
            <person name="Hughes J.E."/>
            <person name="Anderson A.J."/>
            <person name="Sims R.C."/>
            <person name="Richardson P."/>
        </authorList>
    </citation>
    <scope>NUCLEOTIDE SEQUENCE [LARGE SCALE GENOMIC DNA]</scope>
    <source>
        <strain>MCS</strain>
    </source>
</reference>
<keyword id="KW-0489">Methyltransferase</keyword>
<keyword id="KW-0949">S-adenosyl-L-methionine</keyword>
<keyword id="KW-0808">Transferase</keyword>
<proteinExistence type="inferred from homology"/>
<evidence type="ECO:0000250" key="1"/>
<evidence type="ECO:0000305" key="2"/>
<organism>
    <name type="scientific">Mycobacterium sp. (strain MCS)</name>
    <dbReference type="NCBI Taxonomy" id="164756"/>
    <lineage>
        <taxon>Bacteria</taxon>
        <taxon>Bacillati</taxon>
        <taxon>Actinomycetota</taxon>
        <taxon>Actinomycetes</taxon>
        <taxon>Mycobacteriales</taxon>
        <taxon>Mycobacteriaceae</taxon>
        <taxon>Mycobacterium</taxon>
    </lineage>
</organism>
<comment type="function">
    <text evidence="1">Exhibits S-adenosyl-L-methionine-dependent methyltransferase activity.</text>
</comment>
<comment type="similarity">
    <text evidence="2">Belongs to the UPF0677 family.</text>
</comment>